<dbReference type="EC" id="2.4.2.60" evidence="2"/>
<dbReference type="EMBL" id="AB110170">
    <property type="protein sequence ID" value="BAC78562.1"/>
    <property type="molecule type" value="mRNA"/>
</dbReference>
<dbReference type="EMBL" id="AP004674">
    <property type="protein sequence ID" value="BAC45141.1"/>
    <property type="status" value="ALT_INIT"/>
    <property type="molecule type" value="Genomic_DNA"/>
</dbReference>
<dbReference type="EMBL" id="AP008213">
    <property type="protein sequence ID" value="BAF21755.1"/>
    <property type="molecule type" value="Genomic_DNA"/>
</dbReference>
<dbReference type="EMBL" id="AP014963">
    <property type="protein sequence ID" value="BAT01865.1"/>
    <property type="molecule type" value="Genomic_DNA"/>
</dbReference>
<dbReference type="EMBL" id="CM000144">
    <property type="protein sequence ID" value="EAZ40087.1"/>
    <property type="status" value="ALT_INIT"/>
    <property type="molecule type" value="Genomic_DNA"/>
</dbReference>
<dbReference type="EMBL" id="AK099918">
    <property type="protein sequence ID" value="BAG94352.1"/>
    <property type="molecule type" value="mRNA"/>
</dbReference>
<dbReference type="SMR" id="Q7XXS4"/>
<dbReference type="FunCoup" id="Q7XXS4">
    <property type="interactions" value="787"/>
</dbReference>
<dbReference type="STRING" id="39947.Q7XXS4"/>
<dbReference type="PaxDb" id="39947-Q7XXS4"/>
<dbReference type="EnsemblPlants" id="Os07t0529600-01">
    <property type="protein sequence ID" value="Os07t0529600-01"/>
    <property type="gene ID" value="Os07g0529600"/>
</dbReference>
<dbReference type="Gramene" id="Os07t0529600-01">
    <property type="protein sequence ID" value="Os07t0529600-01"/>
    <property type="gene ID" value="Os07g0529600"/>
</dbReference>
<dbReference type="KEGG" id="dosa:Os07g0529600"/>
<dbReference type="KEGG" id="osa:4343443"/>
<dbReference type="eggNOG" id="KOG2960">
    <property type="taxonomic scope" value="Eukaryota"/>
</dbReference>
<dbReference type="HOGENOM" id="CLU_053727_1_0_1"/>
<dbReference type="InParanoid" id="Q7XXS4"/>
<dbReference type="OMA" id="GIVMNWT"/>
<dbReference type="OrthoDB" id="410463at2759"/>
<dbReference type="Proteomes" id="UP000000763">
    <property type="component" value="Chromosome 7"/>
</dbReference>
<dbReference type="Proteomes" id="UP000007752">
    <property type="component" value="Chromosome 7"/>
</dbReference>
<dbReference type="Proteomes" id="UP000059680">
    <property type="component" value="Chromosome 7"/>
</dbReference>
<dbReference type="ExpressionAtlas" id="Q7XXS4">
    <property type="expression patterns" value="baseline and differential"/>
</dbReference>
<dbReference type="GO" id="GO:0009570">
    <property type="term" value="C:chloroplast stroma"/>
    <property type="evidence" value="ECO:0007669"/>
    <property type="project" value="UniProtKB-UniRule"/>
</dbReference>
<dbReference type="GO" id="GO:0005829">
    <property type="term" value="C:cytosol"/>
    <property type="evidence" value="ECO:0007669"/>
    <property type="project" value="UniProtKB-UniRule"/>
</dbReference>
<dbReference type="GO" id="GO:0005739">
    <property type="term" value="C:mitochondrion"/>
    <property type="evidence" value="ECO:0007669"/>
    <property type="project" value="EnsemblPlants"/>
</dbReference>
<dbReference type="GO" id="GO:0010319">
    <property type="term" value="C:stromule"/>
    <property type="evidence" value="ECO:0007669"/>
    <property type="project" value="EnsemblPlants"/>
</dbReference>
<dbReference type="GO" id="GO:0160205">
    <property type="term" value="F:cysteine-dependent adenosine diphosphate thiazole synthase activity"/>
    <property type="evidence" value="ECO:0007669"/>
    <property type="project" value="UniProtKB-EC"/>
</dbReference>
<dbReference type="GO" id="GO:0005506">
    <property type="term" value="F:iron ion binding"/>
    <property type="evidence" value="ECO:0000318"/>
    <property type="project" value="GO_Central"/>
</dbReference>
<dbReference type="GO" id="GO:0019904">
    <property type="term" value="F:protein domain specific binding"/>
    <property type="evidence" value="ECO:0007669"/>
    <property type="project" value="EnsemblPlants"/>
</dbReference>
<dbReference type="GO" id="GO:0042803">
    <property type="term" value="F:protein homodimerization activity"/>
    <property type="evidence" value="ECO:0007669"/>
    <property type="project" value="EnsemblPlants"/>
</dbReference>
<dbReference type="GO" id="GO:0006952">
    <property type="term" value="P:defense response"/>
    <property type="evidence" value="ECO:0007669"/>
    <property type="project" value="UniProtKB-KW"/>
</dbReference>
<dbReference type="GO" id="GO:0006974">
    <property type="term" value="P:DNA damage response"/>
    <property type="evidence" value="ECO:0007669"/>
    <property type="project" value="EnsemblPlants"/>
</dbReference>
<dbReference type="GO" id="GO:0009409">
    <property type="term" value="P:response to cold"/>
    <property type="evidence" value="ECO:0007669"/>
    <property type="project" value="EnsemblPlants"/>
</dbReference>
<dbReference type="GO" id="GO:0009228">
    <property type="term" value="P:thiamine biosynthetic process"/>
    <property type="evidence" value="ECO:0007669"/>
    <property type="project" value="UniProtKB-UniRule"/>
</dbReference>
<dbReference type="GO" id="GO:0052837">
    <property type="term" value="P:thiazole biosynthetic process"/>
    <property type="evidence" value="ECO:0000318"/>
    <property type="project" value="GO_Central"/>
</dbReference>
<dbReference type="FunFam" id="3.50.50.60:FF:000070">
    <property type="entry name" value="Thiamine thiazole synthase, chloroplastic"/>
    <property type="match status" value="1"/>
</dbReference>
<dbReference type="Gene3D" id="6.10.250.2840">
    <property type="match status" value="1"/>
</dbReference>
<dbReference type="Gene3D" id="3.50.50.60">
    <property type="entry name" value="FAD/NAD(P)-binding domain"/>
    <property type="match status" value="1"/>
</dbReference>
<dbReference type="HAMAP" id="MF_03158">
    <property type="entry name" value="THI4"/>
    <property type="match status" value="1"/>
</dbReference>
<dbReference type="InterPro" id="IPR036188">
    <property type="entry name" value="FAD/NAD-bd_sf"/>
</dbReference>
<dbReference type="InterPro" id="IPR027495">
    <property type="entry name" value="Sti35"/>
</dbReference>
<dbReference type="InterPro" id="IPR002922">
    <property type="entry name" value="Thi4_fam"/>
</dbReference>
<dbReference type="NCBIfam" id="TIGR00292">
    <property type="entry name" value="sulfide-dependent adenosine diphosphate thiazole synthase"/>
    <property type="match status" value="1"/>
</dbReference>
<dbReference type="PANTHER" id="PTHR43422">
    <property type="entry name" value="THIAMINE THIAZOLE SYNTHASE"/>
    <property type="match status" value="1"/>
</dbReference>
<dbReference type="PANTHER" id="PTHR43422:SF16">
    <property type="entry name" value="THIAMINE THIAZOLE SYNTHASE, CHLOROPLASTIC"/>
    <property type="match status" value="1"/>
</dbReference>
<dbReference type="Pfam" id="PF01946">
    <property type="entry name" value="Thi4"/>
    <property type="match status" value="1"/>
</dbReference>
<dbReference type="SUPFAM" id="SSF51905">
    <property type="entry name" value="FAD/NAD(P)-binding domain"/>
    <property type="match status" value="1"/>
</dbReference>
<keyword id="KW-0150">Chloroplast</keyword>
<keyword id="KW-0408">Iron</keyword>
<keyword id="KW-0479">Metal-binding</keyword>
<keyword id="KW-0520">NAD</keyword>
<keyword id="KW-0611">Plant defense</keyword>
<keyword id="KW-0934">Plastid</keyword>
<keyword id="KW-1185">Reference proteome</keyword>
<keyword id="KW-0784">Thiamine biosynthesis</keyword>
<keyword id="KW-0808">Transferase</keyword>
<keyword id="KW-0809">Transit peptide</keyword>
<accession>Q7XXS4</accession>
<accession>A3BKJ8</accession>
<accession>Q0D5W8</accession>
<accession>Q8GVQ3</accession>
<name>THI1_ORYSJ</name>
<comment type="function">
    <text evidence="2 3 5 6">Involved in biosynthesis of the thiamine precursor thiazole. Catalyzes the conversion of NAD and glycine to adenosine diphosphate 5-(2-hydroxyethyl)-4-methylthiazole-2-carboxylic acid (ADT), an adenylated thiazole intermediate. The reaction includes an iron-dependent sulfide transfer from a conserved cysteine residue of the protein to a thiazole intermediate. The enzyme can only undergo a single turnover, which suggests it is a suicide enzyme. May have additional roles in adaptation to various stress conditions and in DNA damage tolerance (By similarity). Required fot thiamine accumulation and disease resistance toward the bacterial pathogen Xanthomonas oryzae pv oryzae (Xoo) and the fungal pathogen Magnaporthe oryzae (PubMed:16514565). During infection by Xoo, functions positively in the defense pathway initiated by the resistance genes XA3 and XA26 by promoting thiamine synthesis (PubMed:16514565, PubMed:30158116). May function upstream of the defense-related proteins peroxidases, phenylalanine ammonia-lyases and pathogenesis-related proteins (PubMed:16514565, PubMed:27052628).</text>
</comment>
<comment type="function">
    <text evidence="4 10">(Microbial infection) During infection by Xanthomonas oryzae pv oryzae (Xoo), THI1 interacts with the type III effector virulence factor xadA from Xoo, which is an adhesin-like outer membrane protein (PubMed:24019919). This probably attenuates the function of THI1 in defense response (Probable).</text>
</comment>
<comment type="catalytic activity">
    <reaction evidence="2">
        <text>[ADP-thiazole synthase]-L-cysteine + glycine + NAD(+) = [ADP-thiazole synthase]-dehydroalanine + ADP-5-ethyl-4-methylthiazole-2-carboxylate + nicotinamide + 3 H2O + 2 H(+)</text>
        <dbReference type="Rhea" id="RHEA:55708"/>
        <dbReference type="Rhea" id="RHEA-COMP:14264"/>
        <dbReference type="Rhea" id="RHEA-COMP:14265"/>
        <dbReference type="ChEBI" id="CHEBI:15377"/>
        <dbReference type="ChEBI" id="CHEBI:15378"/>
        <dbReference type="ChEBI" id="CHEBI:17154"/>
        <dbReference type="ChEBI" id="CHEBI:29950"/>
        <dbReference type="ChEBI" id="CHEBI:57305"/>
        <dbReference type="ChEBI" id="CHEBI:57540"/>
        <dbReference type="ChEBI" id="CHEBI:90873"/>
        <dbReference type="ChEBI" id="CHEBI:139151"/>
        <dbReference type="EC" id="2.4.2.60"/>
    </reaction>
</comment>
<comment type="cofactor">
    <cofactor evidence="2">
        <name>Fe cation</name>
        <dbReference type="ChEBI" id="CHEBI:24875"/>
    </cofactor>
    <text evidence="2">Binds 1 Fe cation per subunit.</text>
</comment>
<comment type="subunit">
    <text evidence="2">Homooctamer.</text>
</comment>
<comment type="subcellular location">
    <subcellularLocation>
        <location evidence="2">Plastid</location>
        <location evidence="2">Chloroplast</location>
    </subcellularLocation>
</comment>
<comment type="PTM">
    <text evidence="2">During the catalytic reaction, a sulfide is transferred from Cys-218 to a reaction intermediate, generating a dehydroalanine residue.</text>
</comment>
<comment type="miscellaneous">
    <text evidence="3">Plant silencing THI1 exhibit reduced levels of thiamine and decreased resistance to the bacterial pathogen Xanthomonas oryzae pv oryzae and the fungal pathogen Magnaporthe oryzae.</text>
</comment>
<comment type="similarity">
    <text evidence="2">Belongs to the THI4 family.</text>
</comment>
<comment type="sequence caution" evidence="9">
    <conflict type="erroneous initiation">
        <sequence resource="EMBL-CDS" id="BAC45141"/>
    </conflict>
    <text>Truncated N-terminus.</text>
</comment>
<comment type="sequence caution" evidence="9">
    <conflict type="erroneous initiation">
        <sequence resource="EMBL-CDS" id="EAZ40087"/>
    </conflict>
    <text>Truncated N-terminus.</text>
</comment>
<protein>
    <recommendedName>
        <fullName evidence="2">Thiamine thiazole synthase, chloroplastic</fullName>
    </recommendedName>
    <alternativeName>
        <fullName evidence="8">OsXNP</fullName>
    </alternativeName>
    <alternativeName>
        <fullName evidence="7">Protein DEFENSE-RESPONSIVE GENE 8</fullName>
        <shortName evidence="7">OsDR8</shortName>
    </alternativeName>
    <alternativeName>
        <fullName evidence="2">Thiazole biosynthetic enzyme</fullName>
        <ecNumber evidence="2">2.4.2.60</ecNumber>
    </alternativeName>
</protein>
<feature type="transit peptide" description="Chloroplast" evidence="1">
    <location>
        <begin position="1"/>
        <end position="42"/>
    </location>
</feature>
<feature type="chain" id="PRO_0000456349" description="Thiamine thiazole synthase, chloroplastic" evidence="2">
    <location>
        <begin position="43"/>
        <end position="355"/>
    </location>
</feature>
<feature type="binding site" evidence="2">
    <location>
        <position position="96"/>
    </location>
    <ligand>
        <name>substrate</name>
    </ligand>
</feature>
<feature type="binding site" evidence="2">
    <location>
        <begin position="116"/>
        <end position="117"/>
    </location>
    <ligand>
        <name>substrate</name>
    </ligand>
</feature>
<feature type="binding site" evidence="2">
    <location>
        <position position="124"/>
    </location>
    <ligand>
        <name>substrate</name>
    </ligand>
</feature>
<feature type="binding site" evidence="2">
    <location>
        <position position="189"/>
    </location>
    <ligand>
        <name>substrate</name>
    </ligand>
</feature>
<feature type="binding site" evidence="2">
    <location>
        <position position="220"/>
    </location>
    <ligand>
        <name>substrate</name>
    </ligand>
</feature>
<feature type="binding site" evidence="2">
    <location>
        <position position="235"/>
    </location>
    <ligand>
        <name>substrate</name>
    </ligand>
</feature>
<feature type="binding site" evidence="2">
    <location>
        <position position="287"/>
    </location>
    <ligand>
        <name>substrate</name>
    </ligand>
</feature>
<feature type="binding site" evidence="2">
    <location>
        <begin position="297"/>
        <end position="299"/>
    </location>
    <ligand>
        <name>substrate</name>
    </ligand>
</feature>
<feature type="modified residue" description="2,3-didehydroalanine (Cys)" evidence="2">
    <location>
        <position position="218"/>
    </location>
</feature>
<sequence length="355" mass="37225">MAAMATTASSLLKTSFAGARLPAAARNPTVSVAPRTGGAICNSISSSSSTPPYDLNAIRFSPIKESIVSREMTRRYMTDMITYADTDVVVVGAGSAGLSCAYELSKDPSVSVAVIEQSVSPGGGAWLGGQLFSAMVVRKPAHLFLDELGVAYDEQEDYVVIKHAALFTSTVMSRLLARPNVKLFNAVAVEDLIVKEGRVGGVVTNWALVSMNHDTQSCMDPNVMESRVVVSSCGHDGPFGATGVKRLQDIGMIDAVPGMRALDMNTAEDEIVRLTREVVPGMIVTGMEVAEIDGAPRMGPTFGAMMISGQKAAHLALKALGRPNAIDGTIKKAAAAAAHPELILASKDDGEIVDA</sequence>
<reference key="1">
    <citation type="journal article" date="2005" name="Plant Cell">
        <title>Functional isolation of novel nuclear proteins showing a variety of subnuclear localizations.</title>
        <authorList>
            <person name="Moriguchi K."/>
            <person name="Suzuki T."/>
            <person name="Ito Y."/>
            <person name="Yamazaki Y."/>
            <person name="Niwa Y."/>
            <person name="Kurata N."/>
        </authorList>
    </citation>
    <scope>NUCLEOTIDE SEQUENCE [MRNA]</scope>
    <source>
        <tissue>Panicle</tissue>
    </source>
</reference>
<reference key="2">
    <citation type="journal article" date="2005" name="Nature">
        <title>The map-based sequence of the rice genome.</title>
        <authorList>
            <consortium name="International rice genome sequencing project (IRGSP)"/>
        </authorList>
    </citation>
    <scope>NUCLEOTIDE SEQUENCE [LARGE SCALE GENOMIC DNA]</scope>
    <source>
        <strain>cv. Nipponbare</strain>
    </source>
</reference>
<reference key="3">
    <citation type="journal article" date="2008" name="Nucleic Acids Res.">
        <title>The rice annotation project database (RAP-DB): 2008 update.</title>
        <authorList>
            <consortium name="The rice annotation project (RAP)"/>
        </authorList>
    </citation>
    <scope>GENOME REANNOTATION</scope>
    <source>
        <strain>cv. Nipponbare</strain>
    </source>
</reference>
<reference key="4">
    <citation type="journal article" date="2013" name="Rice">
        <title>Improvement of the Oryza sativa Nipponbare reference genome using next generation sequence and optical map data.</title>
        <authorList>
            <person name="Kawahara Y."/>
            <person name="de la Bastide M."/>
            <person name="Hamilton J.P."/>
            <person name="Kanamori H."/>
            <person name="McCombie W.R."/>
            <person name="Ouyang S."/>
            <person name="Schwartz D.C."/>
            <person name="Tanaka T."/>
            <person name="Wu J."/>
            <person name="Zhou S."/>
            <person name="Childs K.L."/>
            <person name="Davidson R.M."/>
            <person name="Lin H."/>
            <person name="Quesada-Ocampo L."/>
            <person name="Vaillancourt B."/>
            <person name="Sakai H."/>
            <person name="Lee S.S."/>
            <person name="Kim J."/>
            <person name="Numa H."/>
            <person name="Itoh T."/>
            <person name="Buell C.R."/>
            <person name="Matsumoto T."/>
        </authorList>
    </citation>
    <scope>GENOME REANNOTATION</scope>
    <source>
        <strain>cv. Nipponbare</strain>
    </source>
</reference>
<reference key="5">
    <citation type="journal article" date="2005" name="PLoS Biol.">
        <title>The genomes of Oryza sativa: a history of duplications.</title>
        <authorList>
            <person name="Yu J."/>
            <person name="Wang J."/>
            <person name="Lin W."/>
            <person name="Li S."/>
            <person name="Li H."/>
            <person name="Zhou J."/>
            <person name="Ni P."/>
            <person name="Dong W."/>
            <person name="Hu S."/>
            <person name="Zeng C."/>
            <person name="Zhang J."/>
            <person name="Zhang Y."/>
            <person name="Li R."/>
            <person name="Xu Z."/>
            <person name="Li S."/>
            <person name="Li X."/>
            <person name="Zheng H."/>
            <person name="Cong L."/>
            <person name="Lin L."/>
            <person name="Yin J."/>
            <person name="Geng J."/>
            <person name="Li G."/>
            <person name="Shi J."/>
            <person name="Liu J."/>
            <person name="Lv H."/>
            <person name="Li J."/>
            <person name="Wang J."/>
            <person name="Deng Y."/>
            <person name="Ran L."/>
            <person name="Shi X."/>
            <person name="Wang X."/>
            <person name="Wu Q."/>
            <person name="Li C."/>
            <person name="Ren X."/>
            <person name="Wang J."/>
            <person name="Wang X."/>
            <person name="Li D."/>
            <person name="Liu D."/>
            <person name="Zhang X."/>
            <person name="Ji Z."/>
            <person name="Zhao W."/>
            <person name="Sun Y."/>
            <person name="Zhang Z."/>
            <person name="Bao J."/>
            <person name="Han Y."/>
            <person name="Dong L."/>
            <person name="Ji J."/>
            <person name="Chen P."/>
            <person name="Wu S."/>
            <person name="Liu J."/>
            <person name="Xiao Y."/>
            <person name="Bu D."/>
            <person name="Tan J."/>
            <person name="Yang L."/>
            <person name="Ye C."/>
            <person name="Zhang J."/>
            <person name="Xu J."/>
            <person name="Zhou Y."/>
            <person name="Yu Y."/>
            <person name="Zhang B."/>
            <person name="Zhuang S."/>
            <person name="Wei H."/>
            <person name="Liu B."/>
            <person name="Lei M."/>
            <person name="Yu H."/>
            <person name="Li Y."/>
            <person name="Xu H."/>
            <person name="Wei S."/>
            <person name="He X."/>
            <person name="Fang L."/>
            <person name="Zhang Z."/>
            <person name="Zhang Y."/>
            <person name="Huang X."/>
            <person name="Su Z."/>
            <person name="Tong W."/>
            <person name="Li J."/>
            <person name="Tong Z."/>
            <person name="Li S."/>
            <person name="Ye J."/>
            <person name="Wang L."/>
            <person name="Fang L."/>
            <person name="Lei T."/>
            <person name="Chen C.-S."/>
            <person name="Chen H.-C."/>
            <person name="Xu Z."/>
            <person name="Li H."/>
            <person name="Huang H."/>
            <person name="Zhang F."/>
            <person name="Xu H."/>
            <person name="Li N."/>
            <person name="Zhao C."/>
            <person name="Li S."/>
            <person name="Dong L."/>
            <person name="Huang Y."/>
            <person name="Li L."/>
            <person name="Xi Y."/>
            <person name="Qi Q."/>
            <person name="Li W."/>
            <person name="Zhang B."/>
            <person name="Hu W."/>
            <person name="Zhang Y."/>
            <person name="Tian X."/>
            <person name="Jiao Y."/>
            <person name="Liang X."/>
            <person name="Jin J."/>
            <person name="Gao L."/>
            <person name="Zheng W."/>
            <person name="Hao B."/>
            <person name="Liu S.-M."/>
            <person name="Wang W."/>
            <person name="Yuan L."/>
            <person name="Cao M."/>
            <person name="McDermott J."/>
            <person name="Samudrala R."/>
            <person name="Wang J."/>
            <person name="Wong G.K.-S."/>
            <person name="Yang H."/>
        </authorList>
    </citation>
    <scope>NUCLEOTIDE SEQUENCE [LARGE SCALE GENOMIC DNA]</scope>
    <source>
        <strain>cv. Nipponbare</strain>
    </source>
</reference>
<reference key="6">
    <citation type="journal article" date="2003" name="Science">
        <title>Collection, mapping, and annotation of over 28,000 cDNA clones from japonica rice.</title>
        <authorList>
            <consortium name="The rice full-length cDNA consortium"/>
        </authorList>
    </citation>
    <scope>NUCLEOTIDE SEQUENCE [LARGE SCALE MRNA]</scope>
    <source>
        <strain>cv. Nipponbare</strain>
    </source>
</reference>
<reference key="7">
    <citation type="journal article" date="2006" name="Plant Mol. Biol.">
        <title>Dual function of rice OsDR8 gene in disease resistance and thiamine accumulation.</title>
        <authorList>
            <person name="Wang G."/>
            <person name="Ding X."/>
            <person name="Yuan M."/>
            <person name="Qiu D."/>
            <person name="Li X."/>
            <person name="Xu C."/>
            <person name="Wang S."/>
        </authorList>
    </citation>
    <scope>FUNCTION</scope>
</reference>
<reference key="8">
    <citation type="journal article" date="2013" name="PLoS ONE">
        <title>Xanthomonas oryzae pv. oryzae type III effector XopN targets OsVOZ2 and a putative thiamine synthase as a virulence factor in rice.</title>
        <authorList>
            <person name="Cheong H."/>
            <person name="Kim C.Y."/>
            <person name="Jeon J.S."/>
            <person name="Lee B.M."/>
            <person name="Sun Moon J."/>
            <person name="Hwang I."/>
        </authorList>
    </citation>
    <scope>FUNCTION</scope>
</reference>
<reference key="9">
    <citation type="journal article" date="2016" name="Sci. Rep.">
        <title>Both overexpression and suppression of an Oryza sativa NB-LRR-like gene OsLSR result in autoactivation of immune response and thiamine accumulation.</title>
        <authorList>
            <person name="Wang L."/>
            <person name="Ye X."/>
            <person name="Liu H."/>
            <person name="Liu X."/>
            <person name="Wei C."/>
            <person name="Huang Y."/>
            <person name="Liu Y."/>
            <person name="Tu J."/>
        </authorList>
    </citation>
    <scope>FUNCTION</scope>
</reference>
<reference key="10">
    <citation type="journal article" date="2018" name="Plant Physiol.">
        <title>A cytosolic triosephosphate isomerase is a key component in XA3/XA26-mediated resistance.</title>
        <authorList>
            <person name="Liu Y."/>
            <person name="Cao Y."/>
            <person name="Zhang Q."/>
            <person name="Li X."/>
            <person name="Wang S."/>
        </authorList>
    </citation>
    <scope>FUNCTION</scope>
</reference>
<organism>
    <name type="scientific">Oryza sativa subsp. japonica</name>
    <name type="common">Rice</name>
    <dbReference type="NCBI Taxonomy" id="39947"/>
    <lineage>
        <taxon>Eukaryota</taxon>
        <taxon>Viridiplantae</taxon>
        <taxon>Streptophyta</taxon>
        <taxon>Embryophyta</taxon>
        <taxon>Tracheophyta</taxon>
        <taxon>Spermatophyta</taxon>
        <taxon>Magnoliopsida</taxon>
        <taxon>Liliopsida</taxon>
        <taxon>Poales</taxon>
        <taxon>Poaceae</taxon>
        <taxon>BOP clade</taxon>
        <taxon>Oryzoideae</taxon>
        <taxon>Oryzeae</taxon>
        <taxon>Oryzinae</taxon>
        <taxon>Oryza</taxon>
        <taxon>Oryza sativa</taxon>
    </lineage>
</organism>
<proteinExistence type="evidence at transcript level"/>
<evidence type="ECO:0000255" key="1"/>
<evidence type="ECO:0000255" key="2">
    <source>
        <dbReference type="HAMAP-Rule" id="MF_03158"/>
    </source>
</evidence>
<evidence type="ECO:0000269" key="3">
    <source>
    </source>
</evidence>
<evidence type="ECO:0000269" key="4">
    <source>
    </source>
</evidence>
<evidence type="ECO:0000269" key="5">
    <source>
    </source>
</evidence>
<evidence type="ECO:0000269" key="6">
    <source>
    </source>
</evidence>
<evidence type="ECO:0000303" key="7">
    <source>
    </source>
</evidence>
<evidence type="ECO:0000303" key="8">
    <source>
    </source>
</evidence>
<evidence type="ECO:0000305" key="9"/>
<evidence type="ECO:0000305" key="10">
    <source>
    </source>
</evidence>
<evidence type="ECO:0000312" key="11">
    <source>
        <dbReference type="EMBL" id="BAC45141.1"/>
    </source>
</evidence>
<evidence type="ECO:0000312" key="12">
    <source>
        <dbReference type="EMBL" id="BAT01865.1"/>
    </source>
</evidence>
<evidence type="ECO:0000312" key="13">
    <source>
        <dbReference type="EMBL" id="EAZ40087.1"/>
    </source>
</evidence>
<gene>
    <name evidence="2" type="primary">THI1</name>
    <name evidence="7" type="synonym">DR8</name>
    <name evidence="12" type="ordered locus">Os07g0529600</name>
    <name evidence="9" type="ordered locus">LOC_Os07g34570</name>
    <name evidence="13" type="ORF">OsJ_24530</name>
    <name evidence="11" type="ORF">P0681F05.106-1</name>
</gene>